<protein>
    <recommendedName>
        <fullName>Antigen peptide transporter 2</fullName>
        <shortName>APT2</shortName>
        <ecNumber evidence="2">7.4.2.14</ecNumber>
    </recommendedName>
    <alternativeName>
        <fullName>ATP-binding cassette sub-family B member 3</fullName>
    </alternativeName>
    <alternativeName>
        <fullName>Histocompatibility antigen modifier 2</fullName>
    </alternativeName>
</protein>
<reference key="1">
    <citation type="journal article" date="1992" name="J. Biol. Chem.">
        <title>Major histocompatibility complex (MHC)-encoded HAM2 is necessary for antigenic peptide loading onto class I MHC molecules.</title>
        <authorList>
            <person name="Yang Y."/>
            <person name="Frueh K."/>
            <person name="Chambers J."/>
            <person name="Waters J.B."/>
            <person name="Wu L."/>
            <person name="Spies T."/>
            <person name="Peterson P.A."/>
        </authorList>
    </citation>
    <scope>NUCLEOTIDE SEQUENCE [MRNA]</scope>
</reference>
<reference key="2">
    <citation type="journal article" date="2010" name="Cell">
        <title>A tissue-specific atlas of mouse protein phosphorylation and expression.</title>
        <authorList>
            <person name="Huttlin E.L."/>
            <person name="Jedrychowski M.P."/>
            <person name="Elias J.E."/>
            <person name="Goswami T."/>
            <person name="Rad R."/>
            <person name="Beausoleil S.A."/>
            <person name="Villen J."/>
            <person name="Haas W."/>
            <person name="Sowa M.E."/>
            <person name="Gygi S.P."/>
        </authorList>
    </citation>
    <scope>IDENTIFICATION BY MASS SPECTROMETRY [LARGE SCALE ANALYSIS]</scope>
    <source>
        <tissue>Liver</tissue>
        <tissue>Lung</tissue>
        <tissue>Spleen</tissue>
    </source>
</reference>
<name>TAP2_MOUSE</name>
<comment type="function">
    <text evidence="2">ABC transporter associated with antigen processing. In complex with TAP1 mediates unidirectional translocation of peptide antigens from cytosol to endoplasmic reticulum (ER) for loading onto MHC class I (MHCI) molecules. Uses the chemical energy of ATP to export peptides against the concentration gradient. During the transport cycle alternates between 'inward-facing' state with peptide binding site facing the cytosol to 'outward-facing' state with peptide binding site facing the ER lumen. Peptide antigen binding to ATP-loaded TAP1-TAP2 induces a switch to hydrolysis-competent 'outward-facing' conformation ready for peptide loading onto nascent MHCI molecules. Subsequently ATP hydrolysis resets the transporter to the 'inward facing' state for a new cycle. As a component of the peptide loading complex (PLC), acts as a molecular scaffold essential for peptide-MHCI assembly and antigen presentation.</text>
</comment>
<comment type="catalytic activity">
    <reaction evidence="2">
        <text>a peptide antigen(in) + ATP + H2O = a peptide antigen(out) + ADP + phosphate + H(+)</text>
        <dbReference type="Rhea" id="RHEA:65972"/>
        <dbReference type="Rhea" id="RHEA-COMP:16941"/>
        <dbReference type="ChEBI" id="CHEBI:15377"/>
        <dbReference type="ChEBI" id="CHEBI:15378"/>
        <dbReference type="ChEBI" id="CHEBI:30616"/>
        <dbReference type="ChEBI" id="CHEBI:43474"/>
        <dbReference type="ChEBI" id="CHEBI:166823"/>
        <dbReference type="ChEBI" id="CHEBI:456216"/>
        <dbReference type="EC" id="7.4.2.14"/>
    </reaction>
    <physiologicalReaction direction="left-to-right" evidence="2">
        <dbReference type="Rhea" id="RHEA:65973"/>
    </physiologicalReaction>
</comment>
<comment type="cofactor">
    <cofactor evidence="2">
        <name>Mg(2+)</name>
        <dbReference type="ChEBI" id="CHEBI:18420"/>
    </cofactor>
</comment>
<comment type="subunit">
    <text evidence="2">Heterodimer of TAP1 and TAP2 (TAP1-TAP2). A component of the peptide loading complex (PLC), interacts via TAPBP with MHCI heterodimer; this interaction mediates peptide-MHCI assembly.</text>
</comment>
<comment type="subcellular location">
    <subcellularLocation>
        <location evidence="2">Endoplasmic reticulum membrane</location>
        <topology evidence="3">Multi-pass membrane protein</topology>
    </subcellularLocation>
    <text evidence="2">The transmembrane segments seem to form a pore in the membrane.</text>
</comment>
<comment type="domain">
    <text evidence="2">The peptide-binding site is shared between the cytoplasmic loops of TAP1 and TAP2.</text>
</comment>
<comment type="domain">
    <text evidence="1">The nucleotide-binding domain (NBD) mediates ATP hydrolysis coupled to peptide translocation. Two ATP molecules are accommodated at distinct nucleotide binding sites (NBS) at TAP1-TAP2 dimer interface. Each NBS is formed by Walker A (GxxGxGKST) and Q-loop motifs from NBD of one subunit, while the NBD from the second subunit completes the active site by contributing the C loop motif (LSGGQ). Each ATP molecule is coordinated via the beta- and gamma-phosphates to a Mg2+ ion, which is necessary for ATP hydrolysis.</text>
</comment>
<comment type="similarity">
    <text evidence="6">Belongs to the ABC transporter superfamily. ABCB family. MHC peptide exporter (TC 3.A.1.209) subfamily.</text>
</comment>
<gene>
    <name type="primary">Tap2</name>
    <name type="synonym">Abcb3</name>
    <name type="synonym">Ham-2</name>
    <name type="synonym">Ham2</name>
</gene>
<accession>P36371</accession>
<evidence type="ECO:0000250" key="1">
    <source>
        <dbReference type="UniProtKB" id="P36370"/>
    </source>
</evidence>
<evidence type="ECO:0000250" key="2">
    <source>
        <dbReference type="UniProtKB" id="Q03519"/>
    </source>
</evidence>
<evidence type="ECO:0000255" key="3"/>
<evidence type="ECO:0000255" key="4">
    <source>
        <dbReference type="PROSITE-ProRule" id="PRU00434"/>
    </source>
</evidence>
<evidence type="ECO:0000255" key="5">
    <source>
        <dbReference type="PROSITE-ProRule" id="PRU00441"/>
    </source>
</evidence>
<evidence type="ECO:0000305" key="6"/>
<keyword id="KW-1064">Adaptive immunity</keyword>
<keyword id="KW-0067">ATP-binding</keyword>
<keyword id="KW-0256">Endoplasmic reticulum</keyword>
<keyword id="KW-0391">Immunity</keyword>
<keyword id="KW-0460">Magnesium</keyword>
<keyword id="KW-0472">Membrane</keyword>
<keyword id="KW-0479">Metal-binding</keyword>
<keyword id="KW-0547">Nucleotide-binding</keyword>
<keyword id="KW-0571">Peptide transport</keyword>
<keyword id="KW-0653">Protein transport</keyword>
<keyword id="KW-1185">Reference proteome</keyword>
<keyword id="KW-1278">Translocase</keyword>
<keyword id="KW-0812">Transmembrane</keyword>
<keyword id="KW-1133">Transmembrane helix</keyword>
<keyword id="KW-0813">Transport</keyword>
<proteinExistence type="evidence at protein level"/>
<sequence>MALSYLRPWVSLLLADMALLGLLQGSLGNLLPQGLPGLWIEGTLRLGVLWGLLKVGELLGLVGTLLPLLCLATPLFFSLRALVGGTASTSVVRVASASWGWLLAGYGAVALSWAVWAVLSPAGVQEKEPGQENRTLMKRLLKLSRPDLPFLIAAFFFLVVAVWGETLIPRYSGRVIDILGGDFDPDAFASAIFFMCLFSVGSSFSAGCRGGSFLFTMSRINLRIREQLFSSLLRQDLGFFQETKTGELNSRLSSDTSLMSRWLPFNANILLRSLVKVVGLYFFMLQVSPRLTFLSLLDLPLTIAAEKVYNPRHQAVLKEIQDAVAKAGQVVREAVGGLQTVRSFGAEEQEVSHYKEALERCRQLWWRRDLEKDVYLVIRRVMALGMQVLILNCGVQQILAGEVTRGGLLSFLLYQEEVGQYVRNLVYMYGDMLSNVGAAEKVFSYLDRKPNLPQPGILAPPWLEGRVEFQDVSFSYPRRPEKPVLQGLTFTLHPGTVTALVGPNGSGKSTVAALLQNLYQPTGGQLLLDGEPLTEYDHHYLHRQVVLVGQEPVLFSGSVKDNIAYGLRDCEDAQVMAAAQAACADDFIGEMTNGINTEIGEKGGQLAVGQKQRLAIARALVRNPRVLILDEATSALDAQCEQALQNWRSQGDRTMLVIAHRLHTVQNADQVLVLKQGRLVEHDQLRDGQDVYAHLVQQRLEA</sequence>
<organism>
    <name type="scientific">Mus musculus</name>
    <name type="common">Mouse</name>
    <dbReference type="NCBI Taxonomy" id="10090"/>
    <lineage>
        <taxon>Eukaryota</taxon>
        <taxon>Metazoa</taxon>
        <taxon>Chordata</taxon>
        <taxon>Craniata</taxon>
        <taxon>Vertebrata</taxon>
        <taxon>Euteleostomi</taxon>
        <taxon>Mammalia</taxon>
        <taxon>Eutheria</taxon>
        <taxon>Euarchontoglires</taxon>
        <taxon>Glires</taxon>
        <taxon>Rodentia</taxon>
        <taxon>Myomorpha</taxon>
        <taxon>Muroidea</taxon>
        <taxon>Muridae</taxon>
        <taxon>Murinae</taxon>
        <taxon>Mus</taxon>
        <taxon>Mus</taxon>
    </lineage>
</organism>
<dbReference type="EC" id="7.4.2.14" evidence="2"/>
<dbReference type="EMBL" id="M90459">
    <property type="protein sequence ID" value="AAA39609.1"/>
    <property type="molecule type" value="mRNA"/>
</dbReference>
<dbReference type="CCDS" id="CCDS28644.1"/>
<dbReference type="PIR" id="A44135">
    <property type="entry name" value="A44135"/>
</dbReference>
<dbReference type="RefSeq" id="NP_035660.3">
    <property type="nucleotide sequence ID" value="NM_011530.3"/>
</dbReference>
<dbReference type="SMR" id="P36371"/>
<dbReference type="BioGRID" id="203967">
    <property type="interactions" value="6"/>
</dbReference>
<dbReference type="FunCoup" id="P36371">
    <property type="interactions" value="458"/>
</dbReference>
<dbReference type="IntAct" id="P36371">
    <property type="interactions" value="2"/>
</dbReference>
<dbReference type="STRING" id="10090.ENSMUSP00000025197"/>
<dbReference type="iPTMnet" id="P36371"/>
<dbReference type="PhosphoSitePlus" id="P36371"/>
<dbReference type="SwissPalm" id="P36371"/>
<dbReference type="PaxDb" id="10090-ENSMUSP00000025197"/>
<dbReference type="PeptideAtlas" id="P36371"/>
<dbReference type="ProteomicsDB" id="263068"/>
<dbReference type="Pumba" id="P36371"/>
<dbReference type="DNASU" id="21355"/>
<dbReference type="Ensembl" id="ENSMUST00000025197.6">
    <property type="protein sequence ID" value="ENSMUSP00000025197.6"/>
    <property type="gene ID" value="ENSMUSG00000024339.13"/>
</dbReference>
<dbReference type="GeneID" id="21355"/>
<dbReference type="KEGG" id="mmu:21355"/>
<dbReference type="UCSC" id="uc008cbx.2">
    <property type="organism name" value="mouse"/>
</dbReference>
<dbReference type="AGR" id="MGI:98484"/>
<dbReference type="CTD" id="6891"/>
<dbReference type="MGI" id="MGI:98484">
    <property type="gene designation" value="Tap2"/>
</dbReference>
<dbReference type="VEuPathDB" id="HostDB:ENSMUSG00000024339"/>
<dbReference type="eggNOG" id="KOG0058">
    <property type="taxonomic scope" value="Eukaryota"/>
</dbReference>
<dbReference type="GeneTree" id="ENSGT00940000160499"/>
<dbReference type="HOGENOM" id="CLU_000604_84_3_1"/>
<dbReference type="InParanoid" id="P36371"/>
<dbReference type="OMA" id="ERQRMTI"/>
<dbReference type="OrthoDB" id="6500128at2759"/>
<dbReference type="PhylomeDB" id="P36371"/>
<dbReference type="TreeFam" id="TF105197"/>
<dbReference type="BRENDA" id="7.4.2.14">
    <property type="organism ID" value="3474"/>
</dbReference>
<dbReference type="Reactome" id="R-MMU-1236974">
    <property type="pathway name" value="ER-Phagosome pathway"/>
</dbReference>
<dbReference type="Reactome" id="R-MMU-983170">
    <property type="pathway name" value="Antigen Presentation: Folding, assembly and peptide loading of class I MHC"/>
</dbReference>
<dbReference type="BioGRID-ORCS" id="21355">
    <property type="hits" value="22 hits in 82 CRISPR screens"/>
</dbReference>
<dbReference type="ChiTaRS" id="Tap2">
    <property type="organism name" value="mouse"/>
</dbReference>
<dbReference type="PRO" id="PR:P36371"/>
<dbReference type="Proteomes" id="UP000000589">
    <property type="component" value="Chromosome 17"/>
</dbReference>
<dbReference type="RNAct" id="P36371">
    <property type="molecule type" value="protein"/>
</dbReference>
<dbReference type="Bgee" id="ENSMUSG00000024339">
    <property type="expression patterns" value="Expressed in thymus and 128 other cell types or tissues"/>
</dbReference>
<dbReference type="ExpressionAtlas" id="P36371">
    <property type="expression patterns" value="baseline and differential"/>
</dbReference>
<dbReference type="GO" id="GO:0016607">
    <property type="term" value="C:nuclear speck"/>
    <property type="evidence" value="ECO:0007669"/>
    <property type="project" value="Ensembl"/>
</dbReference>
<dbReference type="GO" id="GO:0042825">
    <property type="term" value="C:TAP complex"/>
    <property type="evidence" value="ECO:0007669"/>
    <property type="project" value="Ensembl"/>
</dbReference>
<dbReference type="GO" id="GO:0015433">
    <property type="term" value="F:ABC-type peptide antigen transporter activity"/>
    <property type="evidence" value="ECO:0007669"/>
    <property type="project" value="Ensembl"/>
</dbReference>
<dbReference type="GO" id="GO:0005524">
    <property type="term" value="F:ATP binding"/>
    <property type="evidence" value="ECO:0007669"/>
    <property type="project" value="UniProtKB-KW"/>
</dbReference>
<dbReference type="GO" id="GO:0016887">
    <property type="term" value="F:ATP hydrolysis activity"/>
    <property type="evidence" value="ECO:0007669"/>
    <property type="project" value="InterPro"/>
</dbReference>
<dbReference type="GO" id="GO:0046872">
    <property type="term" value="F:metal ion binding"/>
    <property type="evidence" value="ECO:0007669"/>
    <property type="project" value="UniProtKB-KW"/>
</dbReference>
<dbReference type="GO" id="GO:0023029">
    <property type="term" value="F:MHC class Ib protein binding"/>
    <property type="evidence" value="ECO:0007669"/>
    <property type="project" value="Ensembl"/>
</dbReference>
<dbReference type="GO" id="GO:0042605">
    <property type="term" value="F:peptide antigen binding"/>
    <property type="evidence" value="ECO:0007669"/>
    <property type="project" value="Ensembl"/>
</dbReference>
<dbReference type="GO" id="GO:0046978">
    <property type="term" value="F:TAP1 binding"/>
    <property type="evidence" value="ECO:0000353"/>
    <property type="project" value="UniProtKB"/>
</dbReference>
<dbReference type="GO" id="GO:0046980">
    <property type="term" value="F:tapasin binding"/>
    <property type="evidence" value="ECO:0000250"/>
    <property type="project" value="UniProtKB"/>
</dbReference>
<dbReference type="GO" id="GO:0019885">
    <property type="term" value="P:antigen processing and presentation of endogenous peptide antigen via MHC class I"/>
    <property type="evidence" value="ECO:0000266"/>
    <property type="project" value="MGI"/>
</dbReference>
<dbReference type="GO" id="GO:0002485">
    <property type="term" value="P:antigen processing and presentation of endogenous peptide antigen via MHC class I via ER pathway, TAP-dependent"/>
    <property type="evidence" value="ECO:0000314"/>
    <property type="project" value="MGI"/>
</dbReference>
<dbReference type="GO" id="GO:0002489">
    <property type="term" value="P:antigen processing and presentation of endogenous peptide antigen via MHC class Ib via ER pathway, TAP-dependent"/>
    <property type="evidence" value="ECO:0000314"/>
    <property type="project" value="MGI"/>
</dbReference>
<dbReference type="GO" id="GO:0002481">
    <property type="term" value="P:antigen processing and presentation of exogenous protein antigen via MHC class Ib, TAP-dependent"/>
    <property type="evidence" value="ECO:0000315"/>
    <property type="project" value="MGI"/>
</dbReference>
<dbReference type="GO" id="GO:0046967">
    <property type="term" value="P:cytosol to endoplasmic reticulum transport"/>
    <property type="evidence" value="ECO:0007669"/>
    <property type="project" value="Ensembl"/>
</dbReference>
<dbReference type="GO" id="GO:0046968">
    <property type="term" value="P:peptide antigen transport"/>
    <property type="evidence" value="ECO:0007669"/>
    <property type="project" value="Ensembl"/>
</dbReference>
<dbReference type="GO" id="GO:0001916">
    <property type="term" value="P:positive regulation of T cell mediated cytotoxicity"/>
    <property type="evidence" value="ECO:0000314"/>
    <property type="project" value="MGI"/>
</dbReference>
<dbReference type="GO" id="GO:0015031">
    <property type="term" value="P:protein transport"/>
    <property type="evidence" value="ECO:0007669"/>
    <property type="project" value="UniProtKB-KW"/>
</dbReference>
<dbReference type="GO" id="GO:0002237">
    <property type="term" value="P:response to molecule of bacterial origin"/>
    <property type="evidence" value="ECO:0000315"/>
    <property type="project" value="MGI"/>
</dbReference>
<dbReference type="GO" id="GO:0001913">
    <property type="term" value="P:T cell mediated cytotoxicity"/>
    <property type="evidence" value="ECO:0000314"/>
    <property type="project" value="MGI"/>
</dbReference>
<dbReference type="CDD" id="cd18590">
    <property type="entry name" value="ABC_6TM_TAP2"/>
    <property type="match status" value="1"/>
</dbReference>
<dbReference type="FunFam" id="1.20.1560.10:FF:000042">
    <property type="entry name" value="Antigen peptide transporter 2"/>
    <property type="match status" value="1"/>
</dbReference>
<dbReference type="FunFam" id="3.40.50.300:FF:000140">
    <property type="entry name" value="Lipid A export ATP-binding/permease protein MsbA"/>
    <property type="match status" value="1"/>
</dbReference>
<dbReference type="Gene3D" id="1.20.1560.10">
    <property type="entry name" value="ABC transporter type 1, transmembrane domain"/>
    <property type="match status" value="1"/>
</dbReference>
<dbReference type="Gene3D" id="3.40.50.300">
    <property type="entry name" value="P-loop containing nucleotide triphosphate hydrolases"/>
    <property type="match status" value="1"/>
</dbReference>
<dbReference type="InterPro" id="IPR003593">
    <property type="entry name" value="AAA+_ATPase"/>
</dbReference>
<dbReference type="InterPro" id="IPR011527">
    <property type="entry name" value="ABC1_TM_dom"/>
</dbReference>
<dbReference type="InterPro" id="IPR036640">
    <property type="entry name" value="ABC1_TM_sf"/>
</dbReference>
<dbReference type="InterPro" id="IPR013305">
    <property type="entry name" value="ABC_Tap-like"/>
</dbReference>
<dbReference type="InterPro" id="IPR003439">
    <property type="entry name" value="ABC_transporter-like_ATP-bd"/>
</dbReference>
<dbReference type="InterPro" id="IPR017871">
    <property type="entry name" value="ABC_transporter-like_CS"/>
</dbReference>
<dbReference type="InterPro" id="IPR027417">
    <property type="entry name" value="P-loop_NTPase"/>
</dbReference>
<dbReference type="InterPro" id="IPR005293">
    <property type="entry name" value="Tap2/ABCB3"/>
</dbReference>
<dbReference type="InterPro" id="IPR039421">
    <property type="entry name" value="Type_1_exporter"/>
</dbReference>
<dbReference type="NCBIfam" id="TIGR00958">
    <property type="entry name" value="3a01208"/>
    <property type="match status" value="1"/>
</dbReference>
<dbReference type="PANTHER" id="PTHR43394">
    <property type="entry name" value="ATP-DEPENDENT PERMEASE MDL1, MITOCHONDRIAL"/>
    <property type="match status" value="1"/>
</dbReference>
<dbReference type="PANTHER" id="PTHR43394:SF14">
    <property type="entry name" value="TRANSPORTER 2, ATP BINDING CASSETTE SUBFAMILY B"/>
    <property type="match status" value="1"/>
</dbReference>
<dbReference type="Pfam" id="PF00664">
    <property type="entry name" value="ABC_membrane"/>
    <property type="match status" value="1"/>
</dbReference>
<dbReference type="Pfam" id="PF00005">
    <property type="entry name" value="ABC_tran"/>
    <property type="match status" value="1"/>
</dbReference>
<dbReference type="PIRSF" id="PIRSF002773">
    <property type="entry name" value="ABC_prm/ATPase_B"/>
    <property type="match status" value="1"/>
</dbReference>
<dbReference type="PRINTS" id="PR01897">
    <property type="entry name" value="TAP2PROTEIN"/>
</dbReference>
<dbReference type="SMART" id="SM00382">
    <property type="entry name" value="AAA"/>
    <property type="match status" value="1"/>
</dbReference>
<dbReference type="SUPFAM" id="SSF90123">
    <property type="entry name" value="ABC transporter transmembrane region"/>
    <property type="match status" value="1"/>
</dbReference>
<dbReference type="SUPFAM" id="SSF52540">
    <property type="entry name" value="P-loop containing nucleoside triphosphate hydrolases"/>
    <property type="match status" value="1"/>
</dbReference>
<dbReference type="PROSITE" id="PS50929">
    <property type="entry name" value="ABC_TM1F"/>
    <property type="match status" value="1"/>
</dbReference>
<dbReference type="PROSITE" id="PS00211">
    <property type="entry name" value="ABC_TRANSPORTER_1"/>
    <property type="match status" value="1"/>
</dbReference>
<dbReference type="PROSITE" id="PS50893">
    <property type="entry name" value="ABC_TRANSPORTER_2"/>
    <property type="match status" value="1"/>
</dbReference>
<feature type="chain" id="PRO_0000093330" description="Antigen peptide transporter 2">
    <location>
        <begin position="1"/>
        <end position="702"/>
    </location>
</feature>
<feature type="topological domain" description="Lumenal" evidence="3">
    <location>
        <begin position="1"/>
        <end position="6"/>
    </location>
</feature>
<feature type="transmembrane region" description="Helical; Name=1" evidence="5">
    <location>
        <begin position="7"/>
        <end position="27"/>
    </location>
</feature>
<feature type="topological domain" description="Cytoplasmic" evidence="3">
    <location>
        <begin position="28"/>
        <end position="56"/>
    </location>
</feature>
<feature type="transmembrane region" description="Helical; Name=2" evidence="5">
    <location>
        <begin position="57"/>
        <end position="77"/>
    </location>
</feature>
<feature type="topological domain" description="Lumenal" evidence="3">
    <location>
        <begin position="78"/>
        <end position="98"/>
    </location>
</feature>
<feature type="transmembrane region" description="Helical; Name=3" evidence="5">
    <location>
        <begin position="99"/>
        <end position="119"/>
    </location>
</feature>
<feature type="topological domain" description="Cytoplasmic" evidence="3">
    <location>
        <begin position="120"/>
        <end position="147"/>
    </location>
</feature>
<feature type="transmembrane region" description="Helical; Name=4" evidence="5">
    <location>
        <begin position="148"/>
        <end position="168"/>
    </location>
</feature>
<feature type="topological domain" description="Lumenal" evidence="3">
    <location>
        <begin position="169"/>
        <end position="186"/>
    </location>
</feature>
<feature type="transmembrane region" description="Helical; Name=5" evidence="5">
    <location>
        <begin position="187"/>
        <end position="207"/>
    </location>
</feature>
<feature type="topological domain" description="Cytoplasmic" evidence="3">
    <location>
        <begin position="208"/>
        <end position="265"/>
    </location>
</feature>
<feature type="transmembrane region" description="Helical; Name=6" evidence="5">
    <location>
        <begin position="266"/>
        <end position="286"/>
    </location>
</feature>
<feature type="topological domain" description="Lumenal" evidence="3">
    <location>
        <begin position="287"/>
        <end position="292"/>
    </location>
</feature>
<feature type="transmembrane region" description="Helical; Name=7" evidence="5">
    <location>
        <begin position="293"/>
        <end position="313"/>
    </location>
</feature>
<feature type="topological domain" description="Cytoplasmic" evidence="3">
    <location>
        <begin position="314"/>
        <end position="373"/>
    </location>
</feature>
<feature type="transmembrane region" description="Helical; Name=8" evidence="5">
    <location>
        <begin position="374"/>
        <end position="394"/>
    </location>
</feature>
<feature type="topological domain" description="Lumenal" evidence="3">
    <location>
        <begin position="395"/>
        <end position="407"/>
    </location>
</feature>
<feature type="transmembrane region" description="Helical; Name=9" evidence="5">
    <location>
        <begin position="408"/>
        <end position="428"/>
    </location>
</feature>
<feature type="topological domain" description="Cytoplasmic" evidence="3">
    <location>
        <begin position="429"/>
        <end position="702"/>
    </location>
</feature>
<feature type="domain" description="ABC transmembrane type-1" evidence="5">
    <location>
        <begin position="151"/>
        <end position="434"/>
    </location>
</feature>
<feature type="domain" description="ABC transporter" evidence="4">
    <location>
        <begin position="467"/>
        <end position="701"/>
    </location>
</feature>
<feature type="region of interest" description="Part of the peptide-binding site" evidence="2">
    <location>
        <begin position="300"/>
        <end position="388"/>
    </location>
</feature>
<feature type="region of interest" description="Part of the peptide-binding site" evidence="2">
    <location>
        <begin position="413"/>
        <end position="432"/>
    </location>
</feature>
<feature type="binding site" evidence="4">
    <location>
        <begin position="502"/>
        <end position="509"/>
    </location>
    <ligand>
        <name>ATP</name>
        <dbReference type="ChEBI" id="CHEBI:30616"/>
    </ligand>
</feature>
<feature type="site" description="Inter-subunit salt bridge with TAPBP" evidence="2">
    <location>
        <position position="16"/>
    </location>
</feature>